<organism>
    <name type="scientific">Neurospora crassa (strain ATCC 24698 / 74-OR23-1A / CBS 708.71 / DSM 1257 / FGSC 987)</name>
    <dbReference type="NCBI Taxonomy" id="367110"/>
    <lineage>
        <taxon>Eukaryota</taxon>
        <taxon>Fungi</taxon>
        <taxon>Dikarya</taxon>
        <taxon>Ascomycota</taxon>
        <taxon>Pezizomycotina</taxon>
        <taxon>Sordariomycetes</taxon>
        <taxon>Sordariomycetidae</taxon>
        <taxon>Sordariales</taxon>
        <taxon>Sordariaceae</taxon>
        <taxon>Neurospora</taxon>
    </lineage>
</organism>
<reference key="1">
    <citation type="journal article" date="2003" name="Nature">
        <title>The genome sequence of the filamentous fungus Neurospora crassa.</title>
        <authorList>
            <person name="Galagan J.E."/>
            <person name="Calvo S.E."/>
            <person name="Borkovich K.A."/>
            <person name="Selker E.U."/>
            <person name="Read N.D."/>
            <person name="Jaffe D.B."/>
            <person name="FitzHugh W."/>
            <person name="Ma L.-J."/>
            <person name="Smirnov S."/>
            <person name="Purcell S."/>
            <person name="Rehman B."/>
            <person name="Elkins T."/>
            <person name="Engels R."/>
            <person name="Wang S."/>
            <person name="Nielsen C.B."/>
            <person name="Butler J."/>
            <person name="Endrizzi M."/>
            <person name="Qui D."/>
            <person name="Ianakiev P."/>
            <person name="Bell-Pedersen D."/>
            <person name="Nelson M.A."/>
            <person name="Werner-Washburne M."/>
            <person name="Selitrennikoff C.P."/>
            <person name="Kinsey J.A."/>
            <person name="Braun E.L."/>
            <person name="Zelter A."/>
            <person name="Schulte U."/>
            <person name="Kothe G.O."/>
            <person name="Jedd G."/>
            <person name="Mewes H.-W."/>
            <person name="Staben C."/>
            <person name="Marcotte E."/>
            <person name="Greenberg D."/>
            <person name="Roy A."/>
            <person name="Foley K."/>
            <person name="Naylor J."/>
            <person name="Stange-Thomann N."/>
            <person name="Barrett R."/>
            <person name="Gnerre S."/>
            <person name="Kamal M."/>
            <person name="Kamvysselis M."/>
            <person name="Mauceli E.W."/>
            <person name="Bielke C."/>
            <person name="Rudd S."/>
            <person name="Frishman D."/>
            <person name="Krystofova S."/>
            <person name="Rasmussen C."/>
            <person name="Metzenberg R.L."/>
            <person name="Perkins D.D."/>
            <person name="Kroken S."/>
            <person name="Cogoni C."/>
            <person name="Macino G."/>
            <person name="Catcheside D.E.A."/>
            <person name="Li W."/>
            <person name="Pratt R.J."/>
            <person name="Osmani S.A."/>
            <person name="DeSouza C.P.C."/>
            <person name="Glass N.L."/>
            <person name="Orbach M.J."/>
            <person name="Berglund J.A."/>
            <person name="Voelker R."/>
            <person name="Yarden O."/>
            <person name="Plamann M."/>
            <person name="Seiler S."/>
            <person name="Dunlap J.C."/>
            <person name="Radford A."/>
            <person name="Aramayo R."/>
            <person name="Natvig D.O."/>
            <person name="Alex L.A."/>
            <person name="Mannhaupt G."/>
            <person name="Ebbole D.J."/>
            <person name="Freitag M."/>
            <person name="Paulsen I."/>
            <person name="Sachs M.S."/>
            <person name="Lander E.S."/>
            <person name="Nusbaum C."/>
            <person name="Birren B.W."/>
        </authorList>
    </citation>
    <scope>NUCLEOTIDE SEQUENCE [LARGE SCALE GENOMIC DNA]</scope>
    <source>
        <strain>ATCC 24698 / 74-OR23-1A / CBS 708.71 / DSM 1257 / FGSC 987</strain>
    </source>
</reference>
<reference evidence="5 6" key="2">
    <citation type="journal article" date="2020" name="Nat. Commun.">
        <title>Analysis of translating mitoribosome reveals functional characteristics of translation in mitochondria of fungi.</title>
        <authorList>
            <person name="Itoh Y."/>
            <person name="Naschberger A."/>
            <person name="Mortezaei N."/>
            <person name="Herrmann J.M."/>
            <person name="Amunts A."/>
        </authorList>
    </citation>
    <scope>STRUCTURE BY ELECTRON MICROSCOPY (2.85 ANGSTROMS)</scope>
</reference>
<keyword id="KW-0002">3D-structure</keyword>
<keyword id="KW-0496">Mitochondrion</keyword>
<keyword id="KW-1185">Reference proteome</keyword>
<keyword id="KW-0687">Ribonucleoprotein</keyword>
<keyword id="KW-0689">Ribosomal protein</keyword>
<evidence type="ECO:0000269" key="1">
    <source>
    </source>
</evidence>
<evidence type="ECO:0000303" key="2">
    <source>
    </source>
</evidence>
<evidence type="ECO:0000305" key="3"/>
<evidence type="ECO:0000305" key="4">
    <source>
    </source>
</evidence>
<evidence type="ECO:0007744" key="5">
    <source>
        <dbReference type="PDB" id="6YW5"/>
    </source>
</evidence>
<evidence type="ECO:0007744" key="6">
    <source>
        <dbReference type="PDB" id="6YWX"/>
    </source>
</evidence>
<proteinExistence type="evidence at protein level"/>
<feature type="chain" id="PRO_0000458570" description="Small ribosomal subunit protein uS5m">
    <location>
        <begin position="1"/>
        <end position="477"/>
    </location>
</feature>
<dbReference type="EMBL" id="CM002237">
    <property type="protein sequence ID" value="EAA27242.1"/>
    <property type="molecule type" value="Genomic_DNA"/>
</dbReference>
<dbReference type="RefSeq" id="XP_956478.1">
    <property type="nucleotide sequence ID" value="XM_951385.2"/>
</dbReference>
<dbReference type="PDB" id="6YW5">
    <property type="method" value="EM"/>
    <property type="resolution" value="2.85 A"/>
    <property type="chains" value="EE=1-477"/>
</dbReference>
<dbReference type="PDB" id="6YWX">
    <property type="method" value="EM"/>
    <property type="resolution" value="3.10 A"/>
    <property type="chains" value="EE=1-477"/>
</dbReference>
<dbReference type="PDBsum" id="6YW5"/>
<dbReference type="PDBsum" id="6YWX"/>
<dbReference type="EMDB" id="EMD-10958"/>
<dbReference type="EMDB" id="EMD-10978"/>
<dbReference type="SMR" id="Q1K548"/>
<dbReference type="STRING" id="367110.Q1K548"/>
<dbReference type="PaxDb" id="5141-EFNCRP00000001810"/>
<dbReference type="EnsemblFungi" id="EAA27242">
    <property type="protein sequence ID" value="EAA27242"/>
    <property type="gene ID" value="NCU01800"/>
</dbReference>
<dbReference type="GeneID" id="3872627"/>
<dbReference type="KEGG" id="ncr:NCU01800"/>
<dbReference type="VEuPathDB" id="FungiDB:NCU01800"/>
<dbReference type="HOGENOM" id="CLU_037994_1_0_1"/>
<dbReference type="InParanoid" id="Q1K548"/>
<dbReference type="OrthoDB" id="309483at2759"/>
<dbReference type="Proteomes" id="UP000001805">
    <property type="component" value="Chromosome 6, Linkage Group II"/>
</dbReference>
<dbReference type="GO" id="GO:0005763">
    <property type="term" value="C:mitochondrial small ribosomal subunit"/>
    <property type="evidence" value="ECO:0000318"/>
    <property type="project" value="GO_Central"/>
</dbReference>
<dbReference type="GO" id="GO:0003723">
    <property type="term" value="F:RNA binding"/>
    <property type="evidence" value="ECO:0007669"/>
    <property type="project" value="InterPro"/>
</dbReference>
<dbReference type="GO" id="GO:0003735">
    <property type="term" value="F:structural constituent of ribosome"/>
    <property type="evidence" value="ECO:0000318"/>
    <property type="project" value="GO_Central"/>
</dbReference>
<dbReference type="GO" id="GO:0006412">
    <property type="term" value="P:translation"/>
    <property type="evidence" value="ECO:0000318"/>
    <property type="project" value="GO_Central"/>
</dbReference>
<dbReference type="FunFam" id="3.30.160.20:FF:000022">
    <property type="entry name" value="28S ribosomal protein S5, mitochondrial"/>
    <property type="match status" value="1"/>
</dbReference>
<dbReference type="FunFam" id="3.30.230.10:FF:000041">
    <property type="entry name" value="37S ribosomal protein S5"/>
    <property type="match status" value="1"/>
</dbReference>
<dbReference type="Gene3D" id="3.30.160.20">
    <property type="match status" value="1"/>
</dbReference>
<dbReference type="Gene3D" id="3.30.230.10">
    <property type="match status" value="1"/>
</dbReference>
<dbReference type="InterPro" id="IPR020568">
    <property type="entry name" value="Ribosomal_Su5_D2-typ_SF"/>
</dbReference>
<dbReference type="InterPro" id="IPR000851">
    <property type="entry name" value="Ribosomal_uS5"/>
</dbReference>
<dbReference type="InterPro" id="IPR005324">
    <property type="entry name" value="Ribosomal_uS5_C"/>
</dbReference>
<dbReference type="InterPro" id="IPR013810">
    <property type="entry name" value="Ribosomal_uS5_N"/>
</dbReference>
<dbReference type="InterPro" id="IPR014721">
    <property type="entry name" value="Ribsml_uS5_D2-typ_fold_subgr"/>
</dbReference>
<dbReference type="PANTHER" id="PTHR48277">
    <property type="entry name" value="MITOCHONDRIAL RIBOSOMAL PROTEIN S5"/>
    <property type="match status" value="1"/>
</dbReference>
<dbReference type="PANTHER" id="PTHR48277:SF1">
    <property type="entry name" value="MITOCHONDRIAL RIBOSOMAL PROTEIN S5"/>
    <property type="match status" value="1"/>
</dbReference>
<dbReference type="Pfam" id="PF00333">
    <property type="entry name" value="Ribosomal_S5"/>
    <property type="match status" value="1"/>
</dbReference>
<dbReference type="Pfam" id="PF03719">
    <property type="entry name" value="Ribosomal_S5_C"/>
    <property type="match status" value="1"/>
</dbReference>
<dbReference type="SUPFAM" id="SSF54768">
    <property type="entry name" value="dsRNA-binding domain-like"/>
    <property type="match status" value="1"/>
</dbReference>
<dbReference type="SUPFAM" id="SSF54211">
    <property type="entry name" value="Ribosomal protein S5 domain 2-like"/>
    <property type="match status" value="1"/>
</dbReference>
<dbReference type="PROSITE" id="PS50881">
    <property type="entry name" value="S5_DSRBD"/>
    <property type="match status" value="1"/>
</dbReference>
<gene>
    <name type="primary">mrps5</name>
    <name type="ORF">NCU01800</name>
</gene>
<protein>
    <recommendedName>
        <fullName evidence="2">Small ribosomal subunit protein uS5m</fullName>
    </recommendedName>
</protein>
<accession>Q1K548</accession>
<sequence>MSAARFAARSFLSRRLAATVPAAAPAASTPAASTCPAAQQQQSQFHSSAHLEARRRSRFKNVRAVEMGLTSDAKIESFTKKKFAEYTEDEKAALAHNYPAEHMEAIEAAEAAIDPKDLTIQGRLRVDPYRMPYIDDFSEIQPIIDKRARRSAPPSHKARFMDVDEFTQDLINWADEIRRGEPTHRMKKLRDFVPEEFFEKPEGQWPKDVRDEAFTKFWAYLKEQKDADAKAAANATGPTDGDILSYILERSSMTDNNLQANSSLAPALPDKVPGVEGKYRNAIDPADDGLDDKGQYQELKKRTGMSVRQILQLKTKKLVHRRVVNQTRLGKIASDSVMVIAGNGDGWLGLGMAKSVEASIAVEKATLLAIQNMQPIPRYENRTIYGEVTTKVSGTIVRLNSRPPGFGLRVSHRIFEMCRAAGIRDLSAKFLRSRNPMNTVKATYQALLSQPNPEDLAIGRGKKLVDVRKVYYGGSVY</sequence>
<name>RT05_NEUCR</name>
<comment type="function">
    <text evidence="4">Component of the mitochondrial ribosome (mitoribosome), a dedicated translation machinery responsible for the synthesis of mitochondrial genome-encoded proteins, including at least some of the essential transmembrane subunits of the mitochondrial respiratory chain. The mitoribosomes are attached to the mitochondrial inner membrane and translation products are cotranslationally integrated into the membrane.</text>
</comment>
<comment type="subunit">
    <text evidence="1">Component of the mitochondrial small ribosomal subunit (mt-SSU). Mature N.crassa 74S mitochondrial ribosomes consist of a small (37S) and a large (54S) subunit. The 37S small subunit contains a 16S ribosomal RNA (16S mt-rRNA) and 32 different proteins. The 54S large subunit contains a 23S rRNA (23S mt-rRNA) and 42 different proteins. uS3m, uS4m and uS5m form the narrow entry site of the mRNA channel.</text>
</comment>
<comment type="subcellular location">
    <subcellularLocation>
        <location evidence="1">Mitochondrion</location>
    </subcellularLocation>
</comment>
<comment type="similarity">
    <text evidence="3">Belongs to the universal ribosomal protein uS5 family.</text>
</comment>